<keyword id="KW-0430">Lectin</keyword>
<keyword id="KW-1185">Reference proteome</keyword>
<keyword id="KW-0677">Repeat</keyword>
<name>JAL12_ARATH</name>
<proteinExistence type="evidence at transcript level"/>
<dbReference type="EMBL" id="AC006216">
    <property type="protein sequence ID" value="AAD12686.1"/>
    <property type="status" value="ALT_INIT"/>
    <property type="molecule type" value="Genomic_DNA"/>
</dbReference>
<dbReference type="EMBL" id="CP002684">
    <property type="protein sequence ID" value="AEE32757.1"/>
    <property type="molecule type" value="Genomic_DNA"/>
</dbReference>
<dbReference type="EMBL" id="CP002684">
    <property type="protein sequence ID" value="ANM61114.1"/>
    <property type="molecule type" value="Genomic_DNA"/>
</dbReference>
<dbReference type="EMBL" id="AK229754">
    <property type="protein sequence ID" value="BAF01590.1"/>
    <property type="molecule type" value="mRNA"/>
</dbReference>
<dbReference type="EMBL" id="BT010452">
    <property type="protein sequence ID" value="AAQ62872.1"/>
    <property type="molecule type" value="mRNA"/>
</dbReference>
<dbReference type="PIR" id="B96561">
    <property type="entry name" value="B96561"/>
</dbReference>
<dbReference type="RefSeq" id="NP_001323351.1">
    <property type="nucleotide sequence ID" value="NM_001333528.1"/>
</dbReference>
<dbReference type="RefSeq" id="NP_175624.2">
    <property type="nucleotide sequence ID" value="NM_104093.4"/>
</dbReference>
<dbReference type="SMR" id="Q0WMR0"/>
<dbReference type="BioGRID" id="26867">
    <property type="interactions" value="1"/>
</dbReference>
<dbReference type="FunCoup" id="Q0WMR0">
    <property type="interactions" value="6"/>
</dbReference>
<dbReference type="STRING" id="3702.Q0WMR0"/>
<dbReference type="iPTMnet" id="Q0WMR0"/>
<dbReference type="PaxDb" id="3702-AT1G52120.1"/>
<dbReference type="ProteomicsDB" id="232256"/>
<dbReference type="EnsemblPlants" id="AT1G52120.1">
    <property type="protein sequence ID" value="AT1G52120.1"/>
    <property type="gene ID" value="AT1G52120"/>
</dbReference>
<dbReference type="EnsemblPlants" id="AT1G52120.2">
    <property type="protein sequence ID" value="AT1G52120.2"/>
    <property type="gene ID" value="AT1G52120"/>
</dbReference>
<dbReference type="GeneID" id="841642"/>
<dbReference type="Gramene" id="AT1G52120.1">
    <property type="protein sequence ID" value="AT1G52120.1"/>
    <property type="gene ID" value="AT1G52120"/>
</dbReference>
<dbReference type="Gramene" id="AT1G52120.2">
    <property type="protein sequence ID" value="AT1G52120.2"/>
    <property type="gene ID" value="AT1G52120"/>
</dbReference>
<dbReference type="KEGG" id="ath:AT1G52120"/>
<dbReference type="Araport" id="AT1G52120"/>
<dbReference type="TAIR" id="AT1G52120"/>
<dbReference type="eggNOG" id="ENOG502SDKK">
    <property type="taxonomic scope" value="Eukaryota"/>
</dbReference>
<dbReference type="HOGENOM" id="CLU_732272_0_0_1"/>
<dbReference type="InParanoid" id="Q0WMR0"/>
<dbReference type="OrthoDB" id="1030820at2759"/>
<dbReference type="PhylomeDB" id="Q0WMR0"/>
<dbReference type="PRO" id="PR:Q0WMR0"/>
<dbReference type="Proteomes" id="UP000006548">
    <property type="component" value="Chromosome 1"/>
</dbReference>
<dbReference type="ExpressionAtlas" id="Q0WMR0">
    <property type="expression patterns" value="baseline and differential"/>
</dbReference>
<dbReference type="GO" id="GO:0030246">
    <property type="term" value="F:carbohydrate binding"/>
    <property type="evidence" value="ECO:0007669"/>
    <property type="project" value="UniProtKB-KW"/>
</dbReference>
<dbReference type="CDD" id="cd09612">
    <property type="entry name" value="Jacalin"/>
    <property type="match status" value="3"/>
</dbReference>
<dbReference type="FunFam" id="2.100.10.30:FF:000001">
    <property type="entry name" value="Jacalin-related lectin 33"/>
    <property type="match status" value="3"/>
</dbReference>
<dbReference type="Gene3D" id="2.100.10.30">
    <property type="entry name" value="Jacalin-like lectin domain"/>
    <property type="match status" value="3"/>
</dbReference>
<dbReference type="InterPro" id="IPR001229">
    <property type="entry name" value="Jacalin-like_lectin_dom"/>
</dbReference>
<dbReference type="InterPro" id="IPR033734">
    <property type="entry name" value="Jacalin-like_lectin_dom_plant"/>
</dbReference>
<dbReference type="InterPro" id="IPR036404">
    <property type="entry name" value="Jacalin-like_lectin_dom_sf"/>
</dbReference>
<dbReference type="PANTHER" id="PTHR47293:SF11">
    <property type="entry name" value="JACALIN-RELATED LECTIN 12-RELATED"/>
    <property type="match status" value="1"/>
</dbReference>
<dbReference type="PANTHER" id="PTHR47293">
    <property type="entry name" value="JACALIN-RELATED LECTIN 3"/>
    <property type="match status" value="1"/>
</dbReference>
<dbReference type="Pfam" id="PF01419">
    <property type="entry name" value="Jacalin"/>
    <property type="match status" value="3"/>
</dbReference>
<dbReference type="SMART" id="SM00915">
    <property type="entry name" value="Jacalin"/>
    <property type="match status" value="3"/>
</dbReference>
<dbReference type="SUPFAM" id="SSF51101">
    <property type="entry name" value="Mannose-binding lectins"/>
    <property type="match status" value="3"/>
</dbReference>
<dbReference type="PROSITE" id="PS51752">
    <property type="entry name" value="JACALIN_LECTIN"/>
    <property type="match status" value="3"/>
</dbReference>
<gene>
    <name type="primary">JAL12</name>
    <name type="ordered locus">At1g52120</name>
    <name type="ORF">F5F19.18</name>
</gene>
<accession>Q0WMR0</accession>
<accession>Q6NQK1</accession>
<accession>Q9ZU14</accession>
<reference key="1">
    <citation type="journal article" date="2000" name="Nature">
        <title>Sequence and analysis of chromosome 1 of the plant Arabidopsis thaliana.</title>
        <authorList>
            <person name="Theologis A."/>
            <person name="Ecker J.R."/>
            <person name="Palm C.J."/>
            <person name="Federspiel N.A."/>
            <person name="Kaul S."/>
            <person name="White O."/>
            <person name="Alonso J."/>
            <person name="Altafi H."/>
            <person name="Araujo R."/>
            <person name="Bowman C.L."/>
            <person name="Brooks S.Y."/>
            <person name="Buehler E."/>
            <person name="Chan A."/>
            <person name="Chao Q."/>
            <person name="Chen H."/>
            <person name="Cheuk R.F."/>
            <person name="Chin C.W."/>
            <person name="Chung M.K."/>
            <person name="Conn L."/>
            <person name="Conway A.B."/>
            <person name="Conway A.R."/>
            <person name="Creasy T.H."/>
            <person name="Dewar K."/>
            <person name="Dunn P."/>
            <person name="Etgu P."/>
            <person name="Feldblyum T.V."/>
            <person name="Feng J.-D."/>
            <person name="Fong B."/>
            <person name="Fujii C.Y."/>
            <person name="Gill J.E."/>
            <person name="Goldsmith A.D."/>
            <person name="Haas B."/>
            <person name="Hansen N.F."/>
            <person name="Hughes B."/>
            <person name="Huizar L."/>
            <person name="Hunter J.L."/>
            <person name="Jenkins J."/>
            <person name="Johnson-Hopson C."/>
            <person name="Khan S."/>
            <person name="Khaykin E."/>
            <person name="Kim C.J."/>
            <person name="Koo H.L."/>
            <person name="Kremenetskaia I."/>
            <person name="Kurtz D.B."/>
            <person name="Kwan A."/>
            <person name="Lam B."/>
            <person name="Langin-Hooper S."/>
            <person name="Lee A."/>
            <person name="Lee J.M."/>
            <person name="Lenz C.A."/>
            <person name="Li J.H."/>
            <person name="Li Y.-P."/>
            <person name="Lin X."/>
            <person name="Liu S.X."/>
            <person name="Liu Z.A."/>
            <person name="Luros J.S."/>
            <person name="Maiti R."/>
            <person name="Marziali A."/>
            <person name="Militscher J."/>
            <person name="Miranda M."/>
            <person name="Nguyen M."/>
            <person name="Nierman W.C."/>
            <person name="Osborne B.I."/>
            <person name="Pai G."/>
            <person name="Peterson J."/>
            <person name="Pham P.K."/>
            <person name="Rizzo M."/>
            <person name="Rooney T."/>
            <person name="Rowley D."/>
            <person name="Sakano H."/>
            <person name="Salzberg S.L."/>
            <person name="Schwartz J.R."/>
            <person name="Shinn P."/>
            <person name="Southwick A.M."/>
            <person name="Sun H."/>
            <person name="Tallon L.J."/>
            <person name="Tambunga G."/>
            <person name="Toriumi M.J."/>
            <person name="Town C.D."/>
            <person name="Utterback T."/>
            <person name="Van Aken S."/>
            <person name="Vaysberg M."/>
            <person name="Vysotskaia V.S."/>
            <person name="Walker M."/>
            <person name="Wu D."/>
            <person name="Yu G."/>
            <person name="Fraser C.M."/>
            <person name="Venter J.C."/>
            <person name="Davis R.W."/>
        </authorList>
    </citation>
    <scope>NUCLEOTIDE SEQUENCE [LARGE SCALE GENOMIC DNA]</scope>
    <source>
        <strain>cv. Columbia</strain>
    </source>
</reference>
<reference key="2">
    <citation type="journal article" date="2017" name="Plant J.">
        <title>Araport11: a complete reannotation of the Arabidopsis thaliana reference genome.</title>
        <authorList>
            <person name="Cheng C.Y."/>
            <person name="Krishnakumar V."/>
            <person name="Chan A.P."/>
            <person name="Thibaud-Nissen F."/>
            <person name="Schobel S."/>
            <person name="Town C.D."/>
        </authorList>
    </citation>
    <scope>GENOME REANNOTATION</scope>
    <source>
        <strain>cv. Columbia</strain>
    </source>
</reference>
<reference key="3">
    <citation type="submission" date="2006-07" db="EMBL/GenBank/DDBJ databases">
        <title>Large-scale analysis of RIKEN Arabidopsis full-length (RAFL) cDNAs.</title>
        <authorList>
            <person name="Totoki Y."/>
            <person name="Seki M."/>
            <person name="Ishida J."/>
            <person name="Nakajima M."/>
            <person name="Enju A."/>
            <person name="Morosawa T."/>
            <person name="Kamiya A."/>
            <person name="Narusaka M."/>
            <person name="Shin-i T."/>
            <person name="Nakagawa M."/>
            <person name="Sakamoto N."/>
            <person name="Oishi K."/>
            <person name="Kohara Y."/>
            <person name="Kobayashi M."/>
            <person name="Toyoda A."/>
            <person name="Sakaki Y."/>
            <person name="Sakurai T."/>
            <person name="Iida K."/>
            <person name="Akiyama K."/>
            <person name="Satou M."/>
            <person name="Toyoda T."/>
            <person name="Konagaya A."/>
            <person name="Carninci P."/>
            <person name="Kawai J."/>
            <person name="Hayashizaki Y."/>
            <person name="Shinozaki K."/>
        </authorList>
    </citation>
    <scope>NUCLEOTIDE SEQUENCE [LARGE SCALE MRNA]</scope>
</reference>
<reference key="4">
    <citation type="journal article" date="2003" name="Science">
        <title>Empirical analysis of transcriptional activity in the Arabidopsis genome.</title>
        <authorList>
            <person name="Yamada K."/>
            <person name="Lim J."/>
            <person name="Dale J.M."/>
            <person name="Chen H."/>
            <person name="Shinn P."/>
            <person name="Palm C.J."/>
            <person name="Southwick A.M."/>
            <person name="Wu H.C."/>
            <person name="Kim C.J."/>
            <person name="Nguyen M."/>
            <person name="Pham P.K."/>
            <person name="Cheuk R.F."/>
            <person name="Karlin-Newmann G."/>
            <person name="Liu S.X."/>
            <person name="Lam B."/>
            <person name="Sakano H."/>
            <person name="Wu T."/>
            <person name="Yu G."/>
            <person name="Miranda M."/>
            <person name="Quach H.L."/>
            <person name="Tripp M."/>
            <person name="Chang C.H."/>
            <person name="Lee J.M."/>
            <person name="Toriumi M.J."/>
            <person name="Chan M.M."/>
            <person name="Tang C.C."/>
            <person name="Onodera C.S."/>
            <person name="Deng J.M."/>
            <person name="Akiyama K."/>
            <person name="Ansari Y."/>
            <person name="Arakawa T."/>
            <person name="Banh J."/>
            <person name="Banno F."/>
            <person name="Bowser L."/>
            <person name="Brooks S.Y."/>
            <person name="Carninci P."/>
            <person name="Chao Q."/>
            <person name="Choy N."/>
            <person name="Enju A."/>
            <person name="Goldsmith A.D."/>
            <person name="Gurjal M."/>
            <person name="Hansen N.F."/>
            <person name="Hayashizaki Y."/>
            <person name="Johnson-Hopson C."/>
            <person name="Hsuan V.W."/>
            <person name="Iida K."/>
            <person name="Karnes M."/>
            <person name="Khan S."/>
            <person name="Koesema E."/>
            <person name="Ishida J."/>
            <person name="Jiang P.X."/>
            <person name="Jones T."/>
            <person name="Kawai J."/>
            <person name="Kamiya A."/>
            <person name="Meyers C."/>
            <person name="Nakajima M."/>
            <person name="Narusaka M."/>
            <person name="Seki M."/>
            <person name="Sakurai T."/>
            <person name="Satou M."/>
            <person name="Tamse R."/>
            <person name="Vaysberg M."/>
            <person name="Wallender E.K."/>
            <person name="Wong C."/>
            <person name="Yamamura Y."/>
            <person name="Yuan S."/>
            <person name="Shinozaki K."/>
            <person name="Davis R.W."/>
            <person name="Theologis A."/>
            <person name="Ecker J.R."/>
        </authorList>
    </citation>
    <scope>NUCLEOTIDE SEQUENCE [LARGE SCALE MRNA] OF 10-459</scope>
    <source>
        <strain>cv. Columbia</strain>
    </source>
</reference>
<reference key="5">
    <citation type="journal article" date="2008" name="Plant Cell Physiol.">
        <title>Antagonistic jacalin-related lectins regulate the size of ER body-type beta-glucosidase complexes in Arabidopsis thaliana.</title>
        <authorList>
            <person name="Nagano A.J."/>
            <person name="Fukao Y."/>
            <person name="Fujiwara M."/>
            <person name="Nishimura M."/>
            <person name="Hara-Nishimura I."/>
        </authorList>
    </citation>
    <scope>GENE FAMILY</scope>
    <scope>NOMENCLATURE</scope>
</reference>
<evidence type="ECO:0000255" key="1">
    <source>
        <dbReference type="PROSITE-ProRule" id="PRU01088"/>
    </source>
</evidence>
<evidence type="ECO:0000305" key="2"/>
<sequence>MSQDSNALEMIQNEGPKWDDGFDHDDVTKIYLVGGKTGIDFIKIDYVKSGKPKNGPFHGYSGGGFLQMFEIDNLKNEYLESVEGYYTNRSGEFIGAIQFKTNLRVSEIIGYSYWGLKKFKLAKHGNKIIGFQGSAEYRLKDLDAYFTPITPTRMEAQGGNGGTKWDDGGDHDSVTKIQVRINKEGIQYIKFNYVDKDGDPEKEQLHGSETGRGYTLEPFEINHSDKEYLLSIDGCYDEDSGVIQSLQLKTNIKTSEVMGDDEKGTKFTLGCNGHEIIGFHGSAQDNLNALGAYITTLTLTKLEYIGEGSDIWDDGTFEGVKKVSFYHNDGIVRCIEFDYVKDGKIETRVQGGKRGTGDFTKEEFTVDYPNEFLTSVEGTYRDNPGGTLITSLTFKTSNNRTSPILGKASNKTFLLESKGCALVGFHGASSDFFLYALGAYSFPMTSLAEAGRGAIHTSW</sequence>
<feature type="chain" id="PRO_0000430379" description="Jacalin-related lectin 12">
    <location>
        <begin position="1"/>
        <end position="459"/>
    </location>
</feature>
<feature type="domain" description="Jacalin-type lectin 1" evidence="1">
    <location>
        <begin position="2"/>
        <end position="148"/>
    </location>
</feature>
<feature type="domain" description="Jacalin-type lectin 2" evidence="1">
    <location>
        <begin position="151"/>
        <end position="296"/>
    </location>
</feature>
<feature type="domain" description="Jacalin-type lectin 3" evidence="1">
    <location>
        <begin position="298"/>
        <end position="443"/>
    </location>
</feature>
<feature type="sequence conflict" description="In Ref. 4; AAQ62872." evidence="2" ref="4">
    <original>V</original>
    <variation>A</variation>
    <location>
        <position position="332"/>
    </location>
</feature>
<organism>
    <name type="scientific">Arabidopsis thaliana</name>
    <name type="common">Mouse-ear cress</name>
    <dbReference type="NCBI Taxonomy" id="3702"/>
    <lineage>
        <taxon>Eukaryota</taxon>
        <taxon>Viridiplantae</taxon>
        <taxon>Streptophyta</taxon>
        <taxon>Embryophyta</taxon>
        <taxon>Tracheophyta</taxon>
        <taxon>Spermatophyta</taxon>
        <taxon>Magnoliopsida</taxon>
        <taxon>eudicotyledons</taxon>
        <taxon>Gunneridae</taxon>
        <taxon>Pentapetalae</taxon>
        <taxon>rosids</taxon>
        <taxon>malvids</taxon>
        <taxon>Brassicales</taxon>
        <taxon>Brassicaceae</taxon>
        <taxon>Camelineae</taxon>
        <taxon>Arabidopsis</taxon>
    </lineage>
</organism>
<protein>
    <recommendedName>
        <fullName>Jacalin-related lectin 12</fullName>
    </recommendedName>
</protein>
<comment type="similarity">
    <text evidence="1 2">Belongs to the jacalin lectin family.</text>
</comment>
<comment type="sequence caution" evidence="2">
    <conflict type="erroneous initiation">
        <sequence resource="EMBL-CDS" id="AAD12686"/>
    </conflict>
    <text>Truncated N-terminus.</text>
</comment>